<keyword id="KW-1185">Reference proteome</keyword>
<keyword id="KW-0687">Ribonucleoprotein</keyword>
<keyword id="KW-0689">Ribosomal protein</keyword>
<keyword id="KW-0694">RNA-binding</keyword>
<keyword id="KW-0699">rRNA-binding</keyword>
<organism>
    <name type="scientific">Campylobacter hominis (strain ATCC BAA-381 / DSM 21671 / CCUG 45161 / LMG 19568 / NCTC 13146 / CH001A)</name>
    <dbReference type="NCBI Taxonomy" id="360107"/>
    <lineage>
        <taxon>Bacteria</taxon>
        <taxon>Pseudomonadati</taxon>
        <taxon>Campylobacterota</taxon>
        <taxon>Epsilonproteobacteria</taxon>
        <taxon>Campylobacterales</taxon>
        <taxon>Campylobacteraceae</taxon>
        <taxon>Campylobacter</taxon>
    </lineage>
</organism>
<protein>
    <recommendedName>
        <fullName evidence="1">Small ribosomal subunit protein uS3</fullName>
    </recommendedName>
    <alternativeName>
        <fullName evidence="2">30S ribosomal protein S3</fullName>
    </alternativeName>
</protein>
<gene>
    <name evidence="1" type="primary">rpsC</name>
    <name type="ordered locus">CHAB381_0090</name>
</gene>
<name>RS3_CAMHC</name>
<feature type="chain" id="PRO_0000323291" description="Small ribosomal subunit protein uS3">
    <location>
        <begin position="1"/>
        <end position="231"/>
    </location>
</feature>
<feature type="domain" description="KH type-2" evidence="1">
    <location>
        <begin position="39"/>
        <end position="107"/>
    </location>
</feature>
<proteinExistence type="inferred from homology"/>
<reference key="1">
    <citation type="submission" date="2007-07" db="EMBL/GenBank/DDBJ databases">
        <title>Complete genome sequence of Campylobacter hominis ATCC BAA-381, a commensal isolated from the human gastrointestinal tract.</title>
        <authorList>
            <person name="Fouts D.E."/>
            <person name="Mongodin E.F."/>
            <person name="Puiu D."/>
            <person name="Sebastian Y."/>
            <person name="Miller W.G."/>
            <person name="Mandrell R.E."/>
            <person name="Nelson K.E."/>
        </authorList>
    </citation>
    <scope>NUCLEOTIDE SEQUENCE [LARGE SCALE GENOMIC DNA]</scope>
    <source>
        <strain>ATCC BAA-381 / DSM 21671 / CCUG 45161 / LMG 19568 / NCTC 13146 / CH001A</strain>
    </source>
</reference>
<dbReference type="EMBL" id="CP000776">
    <property type="protein sequence ID" value="ABS52484.1"/>
    <property type="molecule type" value="Genomic_DNA"/>
</dbReference>
<dbReference type="RefSeq" id="WP_011991550.1">
    <property type="nucleotide sequence ID" value="NC_009714.1"/>
</dbReference>
<dbReference type="SMR" id="A7HZL2"/>
<dbReference type="STRING" id="360107.CHAB381_0090"/>
<dbReference type="KEGG" id="cha:CHAB381_0090"/>
<dbReference type="eggNOG" id="COG0092">
    <property type="taxonomic scope" value="Bacteria"/>
</dbReference>
<dbReference type="HOGENOM" id="CLU_058591_0_2_7"/>
<dbReference type="OrthoDB" id="9806396at2"/>
<dbReference type="Proteomes" id="UP000002407">
    <property type="component" value="Chromosome"/>
</dbReference>
<dbReference type="GO" id="GO:0022627">
    <property type="term" value="C:cytosolic small ribosomal subunit"/>
    <property type="evidence" value="ECO:0007669"/>
    <property type="project" value="TreeGrafter"/>
</dbReference>
<dbReference type="GO" id="GO:0003729">
    <property type="term" value="F:mRNA binding"/>
    <property type="evidence" value="ECO:0007669"/>
    <property type="project" value="UniProtKB-UniRule"/>
</dbReference>
<dbReference type="GO" id="GO:0019843">
    <property type="term" value="F:rRNA binding"/>
    <property type="evidence" value="ECO:0007669"/>
    <property type="project" value="UniProtKB-UniRule"/>
</dbReference>
<dbReference type="GO" id="GO:0003735">
    <property type="term" value="F:structural constituent of ribosome"/>
    <property type="evidence" value="ECO:0007669"/>
    <property type="project" value="InterPro"/>
</dbReference>
<dbReference type="GO" id="GO:0006412">
    <property type="term" value="P:translation"/>
    <property type="evidence" value="ECO:0007669"/>
    <property type="project" value="UniProtKB-UniRule"/>
</dbReference>
<dbReference type="CDD" id="cd02412">
    <property type="entry name" value="KH-II_30S_S3"/>
    <property type="match status" value="1"/>
</dbReference>
<dbReference type="FunFam" id="3.30.1140.32:FF:000006">
    <property type="entry name" value="30S ribosomal protein S3"/>
    <property type="match status" value="1"/>
</dbReference>
<dbReference type="FunFam" id="3.30.300.20:FF:000001">
    <property type="entry name" value="30S ribosomal protein S3"/>
    <property type="match status" value="1"/>
</dbReference>
<dbReference type="Gene3D" id="3.30.300.20">
    <property type="match status" value="1"/>
</dbReference>
<dbReference type="Gene3D" id="3.30.1140.32">
    <property type="entry name" value="Ribosomal protein S3, C-terminal domain"/>
    <property type="match status" value="1"/>
</dbReference>
<dbReference type="HAMAP" id="MF_01309_B">
    <property type="entry name" value="Ribosomal_uS3_B"/>
    <property type="match status" value="1"/>
</dbReference>
<dbReference type="InterPro" id="IPR004087">
    <property type="entry name" value="KH_dom"/>
</dbReference>
<dbReference type="InterPro" id="IPR015946">
    <property type="entry name" value="KH_dom-like_a/b"/>
</dbReference>
<dbReference type="InterPro" id="IPR004044">
    <property type="entry name" value="KH_dom_type_2"/>
</dbReference>
<dbReference type="InterPro" id="IPR009019">
    <property type="entry name" value="KH_sf_prok-type"/>
</dbReference>
<dbReference type="InterPro" id="IPR036419">
    <property type="entry name" value="Ribosomal_S3_C_sf"/>
</dbReference>
<dbReference type="InterPro" id="IPR005704">
    <property type="entry name" value="Ribosomal_uS3_bac-typ"/>
</dbReference>
<dbReference type="InterPro" id="IPR001351">
    <property type="entry name" value="Ribosomal_uS3_C"/>
</dbReference>
<dbReference type="InterPro" id="IPR018280">
    <property type="entry name" value="Ribosomal_uS3_CS"/>
</dbReference>
<dbReference type="NCBIfam" id="TIGR01009">
    <property type="entry name" value="rpsC_bact"/>
    <property type="match status" value="1"/>
</dbReference>
<dbReference type="PANTHER" id="PTHR11760">
    <property type="entry name" value="30S/40S RIBOSOMAL PROTEIN S3"/>
    <property type="match status" value="1"/>
</dbReference>
<dbReference type="PANTHER" id="PTHR11760:SF19">
    <property type="entry name" value="SMALL RIBOSOMAL SUBUNIT PROTEIN US3C"/>
    <property type="match status" value="1"/>
</dbReference>
<dbReference type="Pfam" id="PF07650">
    <property type="entry name" value="KH_2"/>
    <property type="match status" value="1"/>
</dbReference>
<dbReference type="Pfam" id="PF00189">
    <property type="entry name" value="Ribosomal_S3_C"/>
    <property type="match status" value="1"/>
</dbReference>
<dbReference type="SMART" id="SM00322">
    <property type="entry name" value="KH"/>
    <property type="match status" value="1"/>
</dbReference>
<dbReference type="SUPFAM" id="SSF54814">
    <property type="entry name" value="Prokaryotic type KH domain (KH-domain type II)"/>
    <property type="match status" value="1"/>
</dbReference>
<dbReference type="SUPFAM" id="SSF54821">
    <property type="entry name" value="Ribosomal protein S3 C-terminal domain"/>
    <property type="match status" value="1"/>
</dbReference>
<dbReference type="PROSITE" id="PS50823">
    <property type="entry name" value="KH_TYPE_2"/>
    <property type="match status" value="1"/>
</dbReference>
<dbReference type="PROSITE" id="PS00548">
    <property type="entry name" value="RIBOSOMAL_S3"/>
    <property type="match status" value="1"/>
</dbReference>
<evidence type="ECO:0000255" key="1">
    <source>
        <dbReference type="HAMAP-Rule" id="MF_01309"/>
    </source>
</evidence>
<evidence type="ECO:0000305" key="2"/>
<accession>A7HZL2</accession>
<sequence>MGQKVNPIGLRLGINRNWESRWFPVKSAIPENISEDYKIRKFLKAKLYYAGINQILIERTAKKLRVTIVAARPGVIIGKKGSEIENLKNEVVALLKKDVTINIKEERRPGSSAQLAAENVAMQLEKRVAFRRAMKKVIQSAQKAGAKGIKISVAGRLGGAEMARTEWYLEGRVPLHTLRAKIDYGFAEAHTTYGNIGVKVWIFKGEVLQKGIQAEKTDEAPKKSRRSRRGR</sequence>
<comment type="function">
    <text evidence="1">Binds the lower part of the 30S subunit head. Binds mRNA in the 70S ribosome, positioning it for translation.</text>
</comment>
<comment type="subunit">
    <text evidence="1">Part of the 30S ribosomal subunit. Forms a tight complex with proteins S10 and S14.</text>
</comment>
<comment type="similarity">
    <text evidence="1">Belongs to the universal ribosomal protein uS3 family.</text>
</comment>